<gene>
    <name type="primary">gapA2</name>
    <name type="synonym">gapB</name>
    <name type="ordered locus">SA1510</name>
</gene>
<proteinExistence type="evidence at protein level"/>
<protein>
    <recommendedName>
        <fullName evidence="2">Glyceraldehyde-3-phosphate dehydrogenase 2</fullName>
        <shortName evidence="2">GAPDH 2</shortName>
        <ecNumber evidence="2">1.2.1.12</ecNumber>
    </recommendedName>
    <alternativeName>
        <fullName evidence="2">NAD-dependent glyceraldehyde-3-phosphate dehydrogenase</fullName>
    </alternativeName>
</protein>
<organism>
    <name type="scientific">Staphylococcus aureus (strain N315)</name>
    <dbReference type="NCBI Taxonomy" id="158879"/>
    <lineage>
        <taxon>Bacteria</taxon>
        <taxon>Bacillati</taxon>
        <taxon>Bacillota</taxon>
        <taxon>Bacilli</taxon>
        <taxon>Bacillales</taxon>
        <taxon>Staphylococcaceae</taxon>
        <taxon>Staphylococcus</taxon>
    </lineage>
</organism>
<name>G3P2_STAAN</name>
<dbReference type="EC" id="1.2.1.12" evidence="2"/>
<dbReference type="EMBL" id="BA000018">
    <property type="protein sequence ID" value="BAB42777.1"/>
    <property type="molecule type" value="Genomic_DNA"/>
</dbReference>
<dbReference type="PIR" id="D89952">
    <property type="entry name" value="D89952"/>
</dbReference>
<dbReference type="SMR" id="P99067"/>
<dbReference type="EnsemblBacteria" id="BAB42777">
    <property type="protein sequence ID" value="BAB42777"/>
    <property type="gene ID" value="BAB42777"/>
</dbReference>
<dbReference type="KEGG" id="sau:SA1510"/>
<dbReference type="HOGENOM" id="CLU_030140_0_2_9"/>
<dbReference type="UniPathway" id="UPA00109">
    <property type="reaction ID" value="UER00184"/>
</dbReference>
<dbReference type="GO" id="GO:0005737">
    <property type="term" value="C:cytoplasm"/>
    <property type="evidence" value="ECO:0007669"/>
    <property type="project" value="UniProtKB-SubCell"/>
</dbReference>
<dbReference type="GO" id="GO:0004365">
    <property type="term" value="F:glyceraldehyde-3-phosphate dehydrogenase (NAD+) (phosphorylating) activity"/>
    <property type="evidence" value="ECO:0000250"/>
    <property type="project" value="UniProtKB"/>
</dbReference>
<dbReference type="GO" id="GO:0051287">
    <property type="term" value="F:NAD binding"/>
    <property type="evidence" value="ECO:0000250"/>
    <property type="project" value="UniProtKB"/>
</dbReference>
<dbReference type="GO" id="GO:0050661">
    <property type="term" value="F:NADP binding"/>
    <property type="evidence" value="ECO:0007669"/>
    <property type="project" value="InterPro"/>
</dbReference>
<dbReference type="GO" id="GO:0006006">
    <property type="term" value="P:glucose metabolic process"/>
    <property type="evidence" value="ECO:0007669"/>
    <property type="project" value="InterPro"/>
</dbReference>
<dbReference type="GO" id="GO:0006096">
    <property type="term" value="P:glycolytic process"/>
    <property type="evidence" value="ECO:0007669"/>
    <property type="project" value="UniProtKB-UniPathway"/>
</dbReference>
<dbReference type="CDD" id="cd18126">
    <property type="entry name" value="GAPDH_I_C"/>
    <property type="match status" value="1"/>
</dbReference>
<dbReference type="CDD" id="cd05214">
    <property type="entry name" value="GAPDH_I_N"/>
    <property type="match status" value="1"/>
</dbReference>
<dbReference type="FunFam" id="3.30.360.10:FF:000002">
    <property type="entry name" value="Glyceraldehyde-3-phosphate dehydrogenase"/>
    <property type="match status" value="1"/>
</dbReference>
<dbReference type="FunFam" id="3.40.50.720:FF:000001">
    <property type="entry name" value="Glyceraldehyde-3-phosphate dehydrogenase"/>
    <property type="match status" value="1"/>
</dbReference>
<dbReference type="Gene3D" id="3.30.360.10">
    <property type="entry name" value="Dihydrodipicolinate Reductase, domain 2"/>
    <property type="match status" value="1"/>
</dbReference>
<dbReference type="Gene3D" id="3.40.50.720">
    <property type="entry name" value="NAD(P)-binding Rossmann-like Domain"/>
    <property type="match status" value="1"/>
</dbReference>
<dbReference type="InterPro" id="IPR020831">
    <property type="entry name" value="GlycerAld/Erythrose_P_DH"/>
</dbReference>
<dbReference type="InterPro" id="IPR020830">
    <property type="entry name" value="GlycerAld_3-P_DH_AS"/>
</dbReference>
<dbReference type="InterPro" id="IPR020829">
    <property type="entry name" value="GlycerAld_3-P_DH_cat"/>
</dbReference>
<dbReference type="InterPro" id="IPR020828">
    <property type="entry name" value="GlycerAld_3-P_DH_NAD(P)-bd"/>
</dbReference>
<dbReference type="InterPro" id="IPR006424">
    <property type="entry name" value="Glyceraldehyde-3-P_DH_1"/>
</dbReference>
<dbReference type="InterPro" id="IPR036291">
    <property type="entry name" value="NAD(P)-bd_dom_sf"/>
</dbReference>
<dbReference type="NCBIfam" id="TIGR01534">
    <property type="entry name" value="GAPDH-I"/>
    <property type="match status" value="1"/>
</dbReference>
<dbReference type="PANTHER" id="PTHR43148">
    <property type="entry name" value="GLYCERALDEHYDE-3-PHOSPHATE DEHYDROGENASE 2"/>
    <property type="match status" value="1"/>
</dbReference>
<dbReference type="Pfam" id="PF02800">
    <property type="entry name" value="Gp_dh_C"/>
    <property type="match status" value="1"/>
</dbReference>
<dbReference type="Pfam" id="PF00044">
    <property type="entry name" value="Gp_dh_N"/>
    <property type="match status" value="1"/>
</dbReference>
<dbReference type="PIRSF" id="PIRSF000149">
    <property type="entry name" value="GAP_DH"/>
    <property type="match status" value="1"/>
</dbReference>
<dbReference type="PRINTS" id="PR00078">
    <property type="entry name" value="G3PDHDRGNASE"/>
</dbReference>
<dbReference type="SMART" id="SM00846">
    <property type="entry name" value="Gp_dh_N"/>
    <property type="match status" value="1"/>
</dbReference>
<dbReference type="SUPFAM" id="SSF55347">
    <property type="entry name" value="Glyceraldehyde-3-phosphate dehydrogenase-like, C-terminal domain"/>
    <property type="match status" value="1"/>
</dbReference>
<dbReference type="SUPFAM" id="SSF51735">
    <property type="entry name" value="NAD(P)-binding Rossmann-fold domains"/>
    <property type="match status" value="1"/>
</dbReference>
<dbReference type="PROSITE" id="PS00071">
    <property type="entry name" value="GAPDH"/>
    <property type="match status" value="1"/>
</dbReference>
<reference key="1">
    <citation type="journal article" date="2001" name="Lancet">
        <title>Whole genome sequencing of meticillin-resistant Staphylococcus aureus.</title>
        <authorList>
            <person name="Kuroda M."/>
            <person name="Ohta T."/>
            <person name="Uchiyama I."/>
            <person name="Baba T."/>
            <person name="Yuzawa H."/>
            <person name="Kobayashi I."/>
            <person name="Cui L."/>
            <person name="Oguchi A."/>
            <person name="Aoki K."/>
            <person name="Nagai Y."/>
            <person name="Lian J.-Q."/>
            <person name="Ito T."/>
            <person name="Kanamori M."/>
            <person name="Matsumaru H."/>
            <person name="Maruyama A."/>
            <person name="Murakami H."/>
            <person name="Hosoyama A."/>
            <person name="Mizutani-Ui Y."/>
            <person name="Takahashi N.K."/>
            <person name="Sawano T."/>
            <person name="Inoue R."/>
            <person name="Kaito C."/>
            <person name="Sekimizu K."/>
            <person name="Hirakawa H."/>
            <person name="Kuhara S."/>
            <person name="Goto S."/>
            <person name="Yabuzaki J."/>
            <person name="Kanehisa M."/>
            <person name="Yamashita A."/>
            <person name="Oshima K."/>
            <person name="Furuya K."/>
            <person name="Yoshino C."/>
            <person name="Shiba T."/>
            <person name="Hattori M."/>
            <person name="Ogasawara N."/>
            <person name="Hayashi H."/>
            <person name="Hiramatsu K."/>
        </authorList>
    </citation>
    <scope>NUCLEOTIDE SEQUENCE [LARGE SCALE GENOMIC DNA]</scope>
    <source>
        <strain>N315</strain>
    </source>
</reference>
<reference key="2">
    <citation type="journal article" date="2005" name="J. Microbiol. Methods">
        <title>Correlation of proteomic and transcriptomic profiles of Staphylococcus aureus during the post-exponential phase of growth.</title>
        <authorList>
            <person name="Scherl A."/>
            <person name="Francois P."/>
            <person name="Bento M."/>
            <person name="Deshusses J.M."/>
            <person name="Charbonnier Y."/>
            <person name="Converset V."/>
            <person name="Huyghe A."/>
            <person name="Walter N."/>
            <person name="Hoogland C."/>
            <person name="Appel R.D."/>
            <person name="Sanchez J.-C."/>
            <person name="Zimmermann-Ivol C.G."/>
            <person name="Corthals G.L."/>
            <person name="Hochstrasser D.F."/>
            <person name="Schrenzel J."/>
        </authorList>
    </citation>
    <scope>IDENTIFICATION BY MASS SPECTROMETRY</scope>
    <source>
        <strain>N315</strain>
    </source>
</reference>
<reference key="3">
    <citation type="submission" date="2007-10" db="UniProtKB">
        <title>Shotgun proteomic analysis of total and membrane protein extracts of S. aureus strain N315.</title>
        <authorList>
            <person name="Vaezzadeh A.R."/>
            <person name="Deshusses J."/>
            <person name="Lescuyer P."/>
            <person name="Hochstrasser D.F."/>
        </authorList>
    </citation>
    <scope>IDENTIFICATION BY MASS SPECTROMETRY [LARGE SCALE ANALYSIS]</scope>
    <source>
        <strain>N315</strain>
    </source>
</reference>
<accession>P99067</accession>
<accession>Q99TH5</accession>
<evidence type="ECO:0000250" key="1">
    <source>
        <dbReference type="UniProtKB" id="P00362"/>
    </source>
</evidence>
<evidence type="ECO:0000250" key="2">
    <source>
        <dbReference type="UniProtKB" id="Q6GIL8"/>
    </source>
</evidence>
<evidence type="ECO:0000305" key="3"/>
<sequence length="341" mass="36979">MSTNIAINGMGRIGRMVLRIALQNKNLNVVAINASYPPETIAHLINYDTTHGKYNLKVEPIENGLQVGDHKIKLVADRNPENLPWKELDIDIAIDATGKFNHGDKAIAHIKAGAKKVLLTGPSKGGHVQMVVKGVNDNQLDIEAFDIFSNASCTTNCIGPVAKVLNNQFGIVNGLMTTVHAITNDQKNIDNPHKDLRRARSCNESIIPTSTGAAKALKEVLPELEGKLHGMALRVPTKNVSLVDLVVDLEKEVTAEEVNQAFENAGLEGIIEVEHQPLVSVDFNTNPNSAIIDAKSTMVMSGNKVKVIAWYDNEWGYSNRVVDVAEQIGALLTSKETVSAS</sequence>
<feature type="chain" id="PRO_0000145693" description="Glyceraldehyde-3-phosphate dehydrogenase 2">
    <location>
        <begin position="1"/>
        <end position="341"/>
    </location>
</feature>
<feature type="active site" description="Nucleophile" evidence="2">
    <location>
        <position position="153"/>
    </location>
</feature>
<feature type="binding site" evidence="1">
    <location>
        <begin position="12"/>
        <end position="13"/>
    </location>
    <ligand>
        <name>NAD(+)</name>
        <dbReference type="ChEBI" id="CHEBI:57540"/>
    </ligand>
</feature>
<feature type="binding site" evidence="2">
    <location>
        <position position="78"/>
    </location>
    <ligand>
        <name>NAD(+)</name>
        <dbReference type="ChEBI" id="CHEBI:57540"/>
    </ligand>
</feature>
<feature type="binding site" evidence="2">
    <location>
        <position position="120"/>
    </location>
    <ligand>
        <name>NAD(+)</name>
        <dbReference type="ChEBI" id="CHEBI:57540"/>
    </ligand>
</feature>
<feature type="binding site" evidence="2">
    <location>
        <begin position="152"/>
        <end position="154"/>
    </location>
    <ligand>
        <name>D-glyceraldehyde 3-phosphate</name>
        <dbReference type="ChEBI" id="CHEBI:59776"/>
    </ligand>
</feature>
<feature type="binding site" evidence="2">
    <location>
        <position position="183"/>
    </location>
    <ligand>
        <name>D-glyceraldehyde 3-phosphate</name>
        <dbReference type="ChEBI" id="CHEBI:59776"/>
    </ligand>
</feature>
<feature type="binding site" evidence="2">
    <location>
        <position position="184"/>
    </location>
    <ligand>
        <name>NAD(+)</name>
        <dbReference type="ChEBI" id="CHEBI:57540"/>
    </ligand>
</feature>
<feature type="binding site" evidence="1">
    <location>
        <position position="198"/>
    </location>
    <ligand>
        <name>D-glyceraldehyde 3-phosphate</name>
        <dbReference type="ChEBI" id="CHEBI:59776"/>
    </ligand>
</feature>
<feature type="binding site" evidence="2">
    <location>
        <begin position="211"/>
        <end position="212"/>
    </location>
    <ligand>
        <name>D-glyceraldehyde 3-phosphate</name>
        <dbReference type="ChEBI" id="CHEBI:59776"/>
    </ligand>
</feature>
<feature type="binding site" evidence="2">
    <location>
        <position position="234"/>
    </location>
    <ligand>
        <name>D-glyceraldehyde 3-phosphate</name>
        <dbReference type="ChEBI" id="CHEBI:59776"/>
    </ligand>
</feature>
<feature type="binding site" evidence="2">
    <location>
        <position position="313"/>
    </location>
    <ligand>
        <name>NAD(+)</name>
        <dbReference type="ChEBI" id="CHEBI:57540"/>
    </ligand>
</feature>
<feature type="site" description="Activates thiol group during catalysis" evidence="2">
    <location>
        <position position="180"/>
    </location>
</feature>
<keyword id="KW-0963">Cytoplasm</keyword>
<keyword id="KW-0324">Glycolysis</keyword>
<keyword id="KW-0520">NAD</keyword>
<keyword id="KW-0547">Nucleotide-binding</keyword>
<keyword id="KW-0560">Oxidoreductase</keyword>
<comment type="function">
    <text evidence="2">Catalyzes the oxidative phosphorylation of glyceraldehyde 3-phosphate (G3P) to 1,3-bisphosphoglycerate (BPG) using the cofactor NAD. The first reaction step involves the formation of a hemiacetal intermediate between G3P and a cysteine residue, and this hemiacetal intermediate is then oxidized to a thioester, with concomitant reduction of NAD to NADH. The reduced NADH is then exchanged with the second NAD, and the thioester is attacked by a nucleophilic inorganic phosphate to produce BPG.</text>
</comment>
<comment type="catalytic activity">
    <reaction evidence="2">
        <text>D-glyceraldehyde 3-phosphate + phosphate + NAD(+) = (2R)-3-phospho-glyceroyl phosphate + NADH + H(+)</text>
        <dbReference type="Rhea" id="RHEA:10300"/>
        <dbReference type="ChEBI" id="CHEBI:15378"/>
        <dbReference type="ChEBI" id="CHEBI:43474"/>
        <dbReference type="ChEBI" id="CHEBI:57540"/>
        <dbReference type="ChEBI" id="CHEBI:57604"/>
        <dbReference type="ChEBI" id="CHEBI:57945"/>
        <dbReference type="ChEBI" id="CHEBI:59776"/>
        <dbReference type="EC" id="1.2.1.12"/>
    </reaction>
</comment>
<comment type="pathway">
    <text evidence="3">Carbohydrate degradation; glycolysis; pyruvate from D-glyceraldehyde 3-phosphate: step 1/5.</text>
</comment>
<comment type="subunit">
    <text evidence="2">Homotetramer.</text>
</comment>
<comment type="subcellular location">
    <subcellularLocation>
        <location evidence="3">Cytoplasm</location>
    </subcellularLocation>
</comment>
<comment type="similarity">
    <text evidence="3">Belongs to the glyceraldehyde-3-phosphate dehydrogenase family.</text>
</comment>